<accession>P0A9G0</accession>
<accession>P19797</accession>
<reference key="1">
    <citation type="journal article" date="2001" name="Nature">
        <title>Genome sequence of enterohaemorrhagic Escherichia coli O157:H7.</title>
        <authorList>
            <person name="Perna N.T."/>
            <person name="Plunkett G. III"/>
            <person name="Burland V."/>
            <person name="Mau B."/>
            <person name="Glasner J.D."/>
            <person name="Rose D.J."/>
            <person name="Mayhew G.F."/>
            <person name="Evans P.S."/>
            <person name="Gregor J."/>
            <person name="Kirkpatrick H.A."/>
            <person name="Posfai G."/>
            <person name="Hackett J."/>
            <person name="Klink S."/>
            <person name="Boutin A."/>
            <person name="Shao Y."/>
            <person name="Miller L."/>
            <person name="Grotbeck E.J."/>
            <person name="Davis N.W."/>
            <person name="Lim A."/>
            <person name="Dimalanta E.T."/>
            <person name="Potamousis K."/>
            <person name="Apodaca J."/>
            <person name="Anantharaman T.S."/>
            <person name="Lin J."/>
            <person name="Yen G."/>
            <person name="Schwartz D.C."/>
            <person name="Welch R.A."/>
            <person name="Blattner F.R."/>
        </authorList>
    </citation>
    <scope>NUCLEOTIDE SEQUENCE [LARGE SCALE GENOMIC DNA]</scope>
    <source>
        <strain>O157:H7 / EDL933 / ATCC 700927 / EHEC</strain>
    </source>
</reference>
<reference key="2">
    <citation type="journal article" date="2001" name="DNA Res.">
        <title>Complete genome sequence of enterohemorrhagic Escherichia coli O157:H7 and genomic comparison with a laboratory strain K-12.</title>
        <authorList>
            <person name="Hayashi T."/>
            <person name="Makino K."/>
            <person name="Ohnishi M."/>
            <person name="Kurokawa K."/>
            <person name="Ishii K."/>
            <person name="Yokoyama K."/>
            <person name="Han C.-G."/>
            <person name="Ohtsubo E."/>
            <person name="Nakayama K."/>
            <person name="Murata T."/>
            <person name="Tanaka M."/>
            <person name="Tobe T."/>
            <person name="Iida T."/>
            <person name="Takami H."/>
            <person name="Honda T."/>
            <person name="Sasakawa C."/>
            <person name="Ogasawara N."/>
            <person name="Yasunaga T."/>
            <person name="Kuhara S."/>
            <person name="Shiba T."/>
            <person name="Hattori M."/>
            <person name="Shinagawa H."/>
        </authorList>
    </citation>
    <scope>NUCLEOTIDE SEQUENCE [LARGE SCALE GENOMIC DNA]</scope>
    <source>
        <strain>O157:H7 / Sakai / RIMD 0509952 / EHEC</strain>
    </source>
</reference>
<keyword id="KW-0010">Activator</keyword>
<keyword id="KW-0028">Amino-acid biosynthesis</keyword>
<keyword id="KW-0963">Cytoplasm</keyword>
<keyword id="KW-0238">DNA-binding</keyword>
<keyword id="KW-0486">Methionine biosynthesis</keyword>
<keyword id="KW-1185">Reference proteome</keyword>
<keyword id="KW-0678">Repressor</keyword>
<keyword id="KW-0804">Transcription</keyword>
<keyword id="KW-0805">Transcription regulation</keyword>
<sequence>MIEVKHLKTLQALRNCGSLAAAAATLHQTQSALSHQFSDLEQRLGFRLFVRKSQPLRFTPQGEILLQLANQVLPQISQALQACNEPQQTRLRIAIECHSCIQWLTPALENFHKNWPQVEMDFKSGVTFDPQPALQQGELDLVMTSDILPRSGLHYSPMFDYEVRLVLAPDHPLAAKTRITPEDLASETLLIYPVQRSRLDVWRHFLQPAGVSPSLKSVDNTLLLIQMVAARMGIAALPHWVVESFERQGLVVTKTLGEGLWSRLYAAVRDGEQRQPVTEAFIRSARNHACDHLPFVKSAERPTYDAPTVRPGSPARL</sequence>
<organism>
    <name type="scientific">Escherichia coli O157:H7</name>
    <dbReference type="NCBI Taxonomy" id="83334"/>
    <lineage>
        <taxon>Bacteria</taxon>
        <taxon>Pseudomonadati</taxon>
        <taxon>Pseudomonadota</taxon>
        <taxon>Gammaproteobacteria</taxon>
        <taxon>Enterobacterales</taxon>
        <taxon>Enterobacteriaceae</taxon>
        <taxon>Escherichia</taxon>
    </lineage>
</organism>
<evidence type="ECO:0000250" key="1"/>
<evidence type="ECO:0000255" key="2">
    <source>
        <dbReference type="PROSITE-ProRule" id="PRU00253"/>
    </source>
</evidence>
<evidence type="ECO:0000305" key="3"/>
<feature type="chain" id="PRO_0000105674" description="HTH-type transcriptional regulator MetR">
    <location>
        <begin position="1"/>
        <end position="317"/>
    </location>
</feature>
<feature type="domain" description="HTH lysR-type" evidence="2">
    <location>
        <begin position="1"/>
        <end position="59"/>
    </location>
</feature>
<feature type="DNA-binding region" description="H-T-H motif" evidence="2">
    <location>
        <begin position="19"/>
        <end position="38"/>
    </location>
</feature>
<comment type="function">
    <text evidence="1">Control of the last step in methionine biosynthesis; MetR is a positive activator of the metA, metE and metH genes. It is also a negative regulator of its own expression (By similarity).</text>
</comment>
<comment type="subcellular location">
    <subcellularLocation>
        <location evidence="3">Cytoplasm</location>
    </subcellularLocation>
</comment>
<comment type="similarity">
    <text evidence="3">Belongs to the LysR transcriptional regulatory family.</text>
</comment>
<proteinExistence type="inferred from homology"/>
<dbReference type="EMBL" id="AE005174">
    <property type="protein sequence ID" value="AAG59024.1"/>
    <property type="molecule type" value="Genomic_DNA"/>
</dbReference>
<dbReference type="EMBL" id="BA000007">
    <property type="protein sequence ID" value="BAB38181.1"/>
    <property type="molecule type" value="Genomic_DNA"/>
</dbReference>
<dbReference type="PIR" id="D86070">
    <property type="entry name" value="D86070"/>
</dbReference>
<dbReference type="PIR" id="F91223">
    <property type="entry name" value="F91223"/>
</dbReference>
<dbReference type="RefSeq" id="NP_312785.1">
    <property type="nucleotide sequence ID" value="NC_002695.1"/>
</dbReference>
<dbReference type="RefSeq" id="WP_000573621.1">
    <property type="nucleotide sequence ID" value="NZ_VOAI01000017.1"/>
</dbReference>
<dbReference type="SMR" id="P0A9G0"/>
<dbReference type="STRING" id="155864.Z5349"/>
<dbReference type="GeneID" id="915146"/>
<dbReference type="KEGG" id="ece:Z5349"/>
<dbReference type="KEGG" id="ecs:ECs_4758"/>
<dbReference type="PATRIC" id="fig|386585.9.peg.4967"/>
<dbReference type="eggNOG" id="COG0583">
    <property type="taxonomic scope" value="Bacteria"/>
</dbReference>
<dbReference type="HOGENOM" id="CLU_039613_6_0_6"/>
<dbReference type="OMA" id="PGNPCHD"/>
<dbReference type="Proteomes" id="UP000000558">
    <property type="component" value="Chromosome"/>
</dbReference>
<dbReference type="Proteomes" id="UP000002519">
    <property type="component" value="Chromosome"/>
</dbReference>
<dbReference type="GO" id="GO:0005737">
    <property type="term" value="C:cytoplasm"/>
    <property type="evidence" value="ECO:0007669"/>
    <property type="project" value="UniProtKB-SubCell"/>
</dbReference>
<dbReference type="GO" id="GO:0003700">
    <property type="term" value="F:DNA-binding transcription factor activity"/>
    <property type="evidence" value="ECO:0007669"/>
    <property type="project" value="InterPro"/>
</dbReference>
<dbReference type="GO" id="GO:0000976">
    <property type="term" value="F:transcription cis-regulatory region binding"/>
    <property type="evidence" value="ECO:0007669"/>
    <property type="project" value="TreeGrafter"/>
</dbReference>
<dbReference type="GO" id="GO:0009086">
    <property type="term" value="P:methionine biosynthetic process"/>
    <property type="evidence" value="ECO:0007669"/>
    <property type="project" value="UniProtKB-KW"/>
</dbReference>
<dbReference type="CDD" id="cd08441">
    <property type="entry name" value="PBP2_MetR"/>
    <property type="match status" value="1"/>
</dbReference>
<dbReference type="FunFam" id="1.10.10.10:FF:000247">
    <property type="entry name" value="HTH-type transcriptional regulator MetR"/>
    <property type="match status" value="1"/>
</dbReference>
<dbReference type="FunFam" id="3.40.190.10:FF:000083">
    <property type="entry name" value="HTH-type transcriptional regulator MetR"/>
    <property type="match status" value="1"/>
</dbReference>
<dbReference type="Gene3D" id="3.40.190.10">
    <property type="entry name" value="Periplasmic binding protein-like II"/>
    <property type="match status" value="2"/>
</dbReference>
<dbReference type="Gene3D" id="1.10.10.10">
    <property type="entry name" value="Winged helix-like DNA-binding domain superfamily/Winged helix DNA-binding domain"/>
    <property type="match status" value="1"/>
</dbReference>
<dbReference type="InterPro" id="IPR005119">
    <property type="entry name" value="LysR_subst-bd"/>
</dbReference>
<dbReference type="InterPro" id="IPR037406">
    <property type="entry name" value="MetR_PBP2"/>
</dbReference>
<dbReference type="InterPro" id="IPR000847">
    <property type="entry name" value="Tscrpt_reg_HTH_LysR"/>
</dbReference>
<dbReference type="InterPro" id="IPR036388">
    <property type="entry name" value="WH-like_DNA-bd_sf"/>
</dbReference>
<dbReference type="InterPro" id="IPR036390">
    <property type="entry name" value="WH_DNA-bd_sf"/>
</dbReference>
<dbReference type="NCBIfam" id="NF011950">
    <property type="entry name" value="PRK15421.1"/>
    <property type="match status" value="1"/>
</dbReference>
<dbReference type="PANTHER" id="PTHR30126">
    <property type="entry name" value="HTH-TYPE TRANSCRIPTIONAL REGULATOR"/>
    <property type="match status" value="1"/>
</dbReference>
<dbReference type="PANTHER" id="PTHR30126:SF25">
    <property type="entry name" value="HTH-TYPE TRANSCRIPTIONAL REGULATOR METR"/>
    <property type="match status" value="1"/>
</dbReference>
<dbReference type="Pfam" id="PF00126">
    <property type="entry name" value="HTH_1"/>
    <property type="match status" value="1"/>
</dbReference>
<dbReference type="Pfam" id="PF03466">
    <property type="entry name" value="LysR_substrate"/>
    <property type="match status" value="1"/>
</dbReference>
<dbReference type="PRINTS" id="PR00039">
    <property type="entry name" value="HTHLYSR"/>
</dbReference>
<dbReference type="SUPFAM" id="SSF53850">
    <property type="entry name" value="Periplasmic binding protein-like II"/>
    <property type="match status" value="1"/>
</dbReference>
<dbReference type="SUPFAM" id="SSF46785">
    <property type="entry name" value="Winged helix' DNA-binding domain"/>
    <property type="match status" value="1"/>
</dbReference>
<dbReference type="PROSITE" id="PS50931">
    <property type="entry name" value="HTH_LYSR"/>
    <property type="match status" value="1"/>
</dbReference>
<protein>
    <recommendedName>
        <fullName>HTH-type transcriptional regulator MetR</fullName>
    </recommendedName>
</protein>
<name>METR_ECO57</name>
<gene>
    <name type="primary">metR</name>
    <name type="ordered locus">Z5349</name>
    <name type="ordered locus">ECs4758</name>
</gene>